<organism>
    <name type="scientific">Synechocystis sp. (strain ATCC 27184 / PCC 6803 / Kazusa)</name>
    <dbReference type="NCBI Taxonomy" id="1111708"/>
    <lineage>
        <taxon>Bacteria</taxon>
        <taxon>Bacillati</taxon>
        <taxon>Cyanobacteriota</taxon>
        <taxon>Cyanophyceae</taxon>
        <taxon>Synechococcales</taxon>
        <taxon>Merismopediaceae</taxon>
        <taxon>Synechocystis</taxon>
    </lineage>
</organism>
<sequence>MGSIRLMHAKLHRVCVTEANVNYVGSITIDPVMLERVGLLPLEEVDIINLSNGNRFSTYVLPGQAHSKEICPNGGAALLCQPGDRLIIFAYELCDRREVLQKGHQAKVLVTNESNETVDFYLQELIPKEDGVKFINNICSEAIPH</sequence>
<feature type="chain" id="PRO_0000023177" description="Aspartate 1-decarboxylase beta chain" evidence="1">
    <location>
        <begin position="1"/>
        <end position="25"/>
    </location>
</feature>
<feature type="chain" id="PRO_0000023178" description="Aspartate 1-decarboxylase alpha chain" evidence="1">
    <location>
        <begin position="26"/>
        <end position="145"/>
    </location>
</feature>
<feature type="active site" description="Schiff-base intermediate with substrate; via pyruvic acid" evidence="1">
    <location>
        <position position="26"/>
    </location>
</feature>
<feature type="active site" description="Proton donor" evidence="1">
    <location>
        <position position="59"/>
    </location>
</feature>
<feature type="binding site" evidence="1">
    <location>
        <position position="58"/>
    </location>
    <ligand>
        <name>substrate</name>
    </ligand>
</feature>
<feature type="binding site" evidence="1">
    <location>
        <begin position="74"/>
        <end position="76"/>
    </location>
    <ligand>
        <name>substrate</name>
    </ligand>
</feature>
<feature type="modified residue" description="Pyruvic acid (Ser)" evidence="1">
    <location>
        <position position="26"/>
    </location>
</feature>
<comment type="function">
    <text evidence="1">Catalyzes the pyruvoyl-dependent decarboxylation of aspartate to produce beta-alanine.</text>
</comment>
<comment type="catalytic activity">
    <reaction evidence="1">
        <text>L-aspartate + H(+) = beta-alanine + CO2</text>
        <dbReference type="Rhea" id="RHEA:19497"/>
        <dbReference type="ChEBI" id="CHEBI:15378"/>
        <dbReference type="ChEBI" id="CHEBI:16526"/>
        <dbReference type="ChEBI" id="CHEBI:29991"/>
        <dbReference type="ChEBI" id="CHEBI:57966"/>
        <dbReference type="EC" id="4.1.1.11"/>
    </reaction>
</comment>
<comment type="cofactor">
    <cofactor evidence="1">
        <name>pyruvate</name>
        <dbReference type="ChEBI" id="CHEBI:15361"/>
    </cofactor>
    <text evidence="1">Binds 1 pyruvoyl group covalently per subunit.</text>
</comment>
<comment type="pathway">
    <text evidence="1">Cofactor biosynthesis; (R)-pantothenate biosynthesis; beta-alanine from L-aspartate: step 1/1.</text>
</comment>
<comment type="subunit">
    <text evidence="1">Heterooctamer of four alpha and four beta subunits.</text>
</comment>
<comment type="subcellular location">
    <subcellularLocation>
        <location evidence="1">Cytoplasm</location>
    </subcellularLocation>
</comment>
<comment type="PTM">
    <text evidence="1">Is synthesized initially as an inactive proenzyme, which is activated by self-cleavage at a specific serine bond to produce a beta-subunit with a hydroxyl group at its C-terminus and an alpha-subunit with a pyruvoyl group at its N-terminus.</text>
</comment>
<comment type="similarity">
    <text evidence="1">Belongs to the PanD family.</text>
</comment>
<protein>
    <recommendedName>
        <fullName evidence="1">Aspartate 1-decarboxylase</fullName>
        <ecNumber evidence="1">4.1.1.11</ecNumber>
    </recommendedName>
    <alternativeName>
        <fullName evidence="1">Aspartate alpha-decarboxylase</fullName>
    </alternativeName>
    <component>
        <recommendedName>
            <fullName evidence="1">Aspartate 1-decarboxylase beta chain</fullName>
        </recommendedName>
    </component>
    <component>
        <recommendedName>
            <fullName evidence="1">Aspartate 1-decarboxylase alpha chain</fullName>
        </recommendedName>
    </component>
</protein>
<keyword id="KW-0068">Autocatalytic cleavage</keyword>
<keyword id="KW-0963">Cytoplasm</keyword>
<keyword id="KW-0210">Decarboxylase</keyword>
<keyword id="KW-0456">Lyase</keyword>
<keyword id="KW-0566">Pantothenate biosynthesis</keyword>
<keyword id="KW-0670">Pyruvate</keyword>
<keyword id="KW-1185">Reference proteome</keyword>
<keyword id="KW-0704">Schiff base</keyword>
<keyword id="KW-0865">Zymogen</keyword>
<reference key="1">
    <citation type="journal article" date="1995" name="DNA Res.">
        <title>Sequence analysis of the genome of the unicellular cyanobacterium Synechocystis sp. strain PCC6803. I. Sequence features in the 1 Mb region from map positions 64% to 92% of the genome.</title>
        <authorList>
            <person name="Kaneko T."/>
            <person name="Tanaka A."/>
            <person name="Sato S."/>
            <person name="Kotani H."/>
            <person name="Sazuka T."/>
            <person name="Miyajima N."/>
            <person name="Sugiura M."/>
            <person name="Tabata S."/>
        </authorList>
    </citation>
    <scope>NUCLEOTIDE SEQUENCE [LARGE SCALE GENOMIC DNA]</scope>
    <source>
        <strain>ATCC 27184 / PCC 6803 / N-1</strain>
    </source>
</reference>
<reference key="2">
    <citation type="journal article" date="1996" name="DNA Res.">
        <title>Sequence analysis of the genome of the unicellular cyanobacterium Synechocystis sp. strain PCC6803. II. Sequence determination of the entire genome and assignment of potential protein-coding regions.</title>
        <authorList>
            <person name="Kaneko T."/>
            <person name="Sato S."/>
            <person name="Kotani H."/>
            <person name="Tanaka A."/>
            <person name="Asamizu E."/>
            <person name="Nakamura Y."/>
            <person name="Miyajima N."/>
            <person name="Hirosawa M."/>
            <person name="Sugiura M."/>
            <person name="Sasamoto S."/>
            <person name="Kimura T."/>
            <person name="Hosouchi T."/>
            <person name="Matsuno A."/>
            <person name="Muraki A."/>
            <person name="Nakazaki N."/>
            <person name="Naruo K."/>
            <person name="Okumura S."/>
            <person name="Shimpo S."/>
            <person name="Takeuchi C."/>
            <person name="Wada T."/>
            <person name="Watanabe A."/>
            <person name="Yamada M."/>
            <person name="Yasuda M."/>
            <person name="Tabata S."/>
        </authorList>
    </citation>
    <scope>NUCLEOTIDE SEQUENCE [LARGE SCALE GENOMIC DNA]</scope>
    <source>
        <strain>ATCC 27184 / PCC 6803 / Kazusa</strain>
    </source>
</reference>
<proteinExistence type="inferred from homology"/>
<evidence type="ECO:0000255" key="1">
    <source>
        <dbReference type="HAMAP-Rule" id="MF_00446"/>
    </source>
</evidence>
<dbReference type="EC" id="4.1.1.11" evidence="1"/>
<dbReference type="EMBL" id="BA000022">
    <property type="protein sequence ID" value="BAA10469.1"/>
    <property type="molecule type" value="Genomic_DNA"/>
</dbReference>
<dbReference type="PIR" id="S75734">
    <property type="entry name" value="S75734"/>
</dbReference>
<dbReference type="SMR" id="Q55382"/>
<dbReference type="FunCoup" id="Q55382">
    <property type="interactions" value="199"/>
</dbReference>
<dbReference type="IntAct" id="Q55382">
    <property type="interactions" value="1"/>
</dbReference>
<dbReference type="STRING" id="1148.gene:10499972"/>
<dbReference type="PaxDb" id="1148-1001229"/>
<dbReference type="EnsemblBacteria" id="BAA10469">
    <property type="protein sequence ID" value="BAA10469"/>
    <property type="gene ID" value="BAA10469"/>
</dbReference>
<dbReference type="KEGG" id="syn:sll0892"/>
<dbReference type="eggNOG" id="COG0853">
    <property type="taxonomic scope" value="Bacteria"/>
</dbReference>
<dbReference type="InParanoid" id="Q55382"/>
<dbReference type="PhylomeDB" id="Q55382"/>
<dbReference type="UniPathway" id="UPA00028">
    <property type="reaction ID" value="UER00002"/>
</dbReference>
<dbReference type="Proteomes" id="UP000001425">
    <property type="component" value="Chromosome"/>
</dbReference>
<dbReference type="GO" id="GO:0005829">
    <property type="term" value="C:cytosol"/>
    <property type="evidence" value="ECO:0000318"/>
    <property type="project" value="GO_Central"/>
</dbReference>
<dbReference type="GO" id="GO:0004068">
    <property type="term" value="F:aspartate 1-decarboxylase activity"/>
    <property type="evidence" value="ECO:0000318"/>
    <property type="project" value="GO_Central"/>
</dbReference>
<dbReference type="GO" id="GO:0006523">
    <property type="term" value="P:alanine biosynthetic process"/>
    <property type="evidence" value="ECO:0000318"/>
    <property type="project" value="GO_Central"/>
</dbReference>
<dbReference type="GO" id="GO:0015940">
    <property type="term" value="P:pantothenate biosynthetic process"/>
    <property type="evidence" value="ECO:0000318"/>
    <property type="project" value="GO_Central"/>
</dbReference>
<dbReference type="CDD" id="cd06919">
    <property type="entry name" value="Asp_decarbox"/>
    <property type="match status" value="1"/>
</dbReference>
<dbReference type="Gene3D" id="2.40.40.20">
    <property type="match status" value="1"/>
</dbReference>
<dbReference type="HAMAP" id="MF_00446">
    <property type="entry name" value="PanD"/>
    <property type="match status" value="1"/>
</dbReference>
<dbReference type="InterPro" id="IPR009010">
    <property type="entry name" value="Asp_de-COase-like_dom_sf"/>
</dbReference>
<dbReference type="InterPro" id="IPR003190">
    <property type="entry name" value="Asp_decarbox"/>
</dbReference>
<dbReference type="NCBIfam" id="TIGR00223">
    <property type="entry name" value="panD"/>
    <property type="match status" value="1"/>
</dbReference>
<dbReference type="PANTHER" id="PTHR21012">
    <property type="entry name" value="ASPARTATE 1-DECARBOXYLASE"/>
    <property type="match status" value="1"/>
</dbReference>
<dbReference type="PANTHER" id="PTHR21012:SF0">
    <property type="entry name" value="ASPARTATE 1-DECARBOXYLASE"/>
    <property type="match status" value="1"/>
</dbReference>
<dbReference type="Pfam" id="PF02261">
    <property type="entry name" value="Asp_decarbox"/>
    <property type="match status" value="1"/>
</dbReference>
<dbReference type="PIRSF" id="PIRSF006246">
    <property type="entry name" value="Asp_decarbox"/>
    <property type="match status" value="1"/>
</dbReference>
<dbReference type="SUPFAM" id="SSF50692">
    <property type="entry name" value="ADC-like"/>
    <property type="match status" value="1"/>
</dbReference>
<name>PAND_SYNY3</name>
<gene>
    <name evidence="1" type="primary">panD</name>
    <name type="ordered locus">sll0892</name>
</gene>
<accession>Q55382</accession>